<accession>C4ZTP9</accession>
<comment type="function">
    <text evidence="1">Catalyzes the phosphorylation of the position 2 hydroxy group of 4-diphosphocytidyl-2C-methyl-D-erythritol.</text>
</comment>
<comment type="catalytic activity">
    <reaction evidence="1">
        <text>4-CDP-2-C-methyl-D-erythritol + ATP = 4-CDP-2-C-methyl-D-erythritol 2-phosphate + ADP + H(+)</text>
        <dbReference type="Rhea" id="RHEA:18437"/>
        <dbReference type="ChEBI" id="CHEBI:15378"/>
        <dbReference type="ChEBI" id="CHEBI:30616"/>
        <dbReference type="ChEBI" id="CHEBI:57823"/>
        <dbReference type="ChEBI" id="CHEBI:57919"/>
        <dbReference type="ChEBI" id="CHEBI:456216"/>
        <dbReference type="EC" id="2.7.1.148"/>
    </reaction>
</comment>
<comment type="pathway">
    <text evidence="1">Isoprenoid biosynthesis; isopentenyl diphosphate biosynthesis via DXP pathway; isopentenyl diphosphate from 1-deoxy-D-xylulose 5-phosphate: step 3/6.</text>
</comment>
<comment type="subunit">
    <text evidence="1">Homodimer.</text>
</comment>
<comment type="similarity">
    <text evidence="1">Belongs to the GHMP kinase family. IspE subfamily.</text>
</comment>
<proteinExistence type="inferred from homology"/>
<gene>
    <name evidence="1" type="primary">ispE</name>
    <name type="ordered locus">BWG_1033</name>
</gene>
<name>ISPE_ECOBW</name>
<feature type="chain" id="PRO_1000202377" description="4-diphosphocytidyl-2-C-methyl-D-erythritol kinase">
    <location>
        <begin position="1"/>
        <end position="283"/>
    </location>
</feature>
<feature type="active site" evidence="1">
    <location>
        <position position="10"/>
    </location>
</feature>
<feature type="active site" evidence="1">
    <location>
        <position position="141"/>
    </location>
</feature>
<feature type="binding site" evidence="1">
    <location>
        <begin position="99"/>
        <end position="109"/>
    </location>
    <ligand>
        <name>ATP</name>
        <dbReference type="ChEBI" id="CHEBI:30616"/>
    </ligand>
</feature>
<keyword id="KW-0067">ATP-binding</keyword>
<keyword id="KW-0414">Isoprene biosynthesis</keyword>
<keyword id="KW-0418">Kinase</keyword>
<keyword id="KW-0547">Nucleotide-binding</keyword>
<keyword id="KW-0808">Transferase</keyword>
<organism>
    <name type="scientific">Escherichia coli (strain K12 / MC4100 / BW2952)</name>
    <dbReference type="NCBI Taxonomy" id="595496"/>
    <lineage>
        <taxon>Bacteria</taxon>
        <taxon>Pseudomonadati</taxon>
        <taxon>Pseudomonadota</taxon>
        <taxon>Gammaproteobacteria</taxon>
        <taxon>Enterobacterales</taxon>
        <taxon>Enterobacteriaceae</taxon>
        <taxon>Escherichia</taxon>
    </lineage>
</organism>
<sequence>MRTQWPSPAKLNLFLYITGQRADGYHTLQTLFQFLDYGDTISIELRDDGDIRLLTPVEGVEHEDNLIVRAARLLMKTAADSGRLPTGSGANISIDKRLPMGGGLGGGSSNAATVLVALNHLWQCGLSMDELAEMGLTLGADVPVFVRGHAAFAEGVGEILTPVDPPEKWYLVAHPGVSIPTPVIFKDPELPRNTPKRSIETLLKCEFSNDCEVIARKRFREVDAVLSWLLEYAPSRLTGTGACVFAEFDTESEARQVLEQAPEWLNGFVAKGANLSPLHRAML</sequence>
<evidence type="ECO:0000255" key="1">
    <source>
        <dbReference type="HAMAP-Rule" id="MF_00061"/>
    </source>
</evidence>
<reference key="1">
    <citation type="journal article" date="2009" name="J. Bacteriol.">
        <title>Genomic sequencing reveals regulatory mutations and recombinational events in the widely used MC4100 lineage of Escherichia coli K-12.</title>
        <authorList>
            <person name="Ferenci T."/>
            <person name="Zhou Z."/>
            <person name="Betteridge T."/>
            <person name="Ren Y."/>
            <person name="Liu Y."/>
            <person name="Feng L."/>
            <person name="Reeves P.R."/>
            <person name="Wang L."/>
        </authorList>
    </citation>
    <scope>NUCLEOTIDE SEQUENCE [LARGE SCALE GENOMIC DNA]</scope>
    <source>
        <strain>K12 / MC4100 / BW2952</strain>
    </source>
</reference>
<dbReference type="EC" id="2.7.1.148" evidence="1"/>
<dbReference type="EMBL" id="CP001396">
    <property type="protein sequence ID" value="ACR61841.1"/>
    <property type="molecule type" value="Genomic_DNA"/>
</dbReference>
<dbReference type="RefSeq" id="WP_001260332.1">
    <property type="nucleotide sequence ID" value="NC_012759.1"/>
</dbReference>
<dbReference type="SMR" id="C4ZTP9"/>
<dbReference type="KEGG" id="ebw:BWG_1033"/>
<dbReference type="HOGENOM" id="CLU_053057_3_0_6"/>
<dbReference type="UniPathway" id="UPA00056">
    <property type="reaction ID" value="UER00094"/>
</dbReference>
<dbReference type="GO" id="GO:0050515">
    <property type="term" value="F:4-(cytidine 5'-diphospho)-2-C-methyl-D-erythritol kinase activity"/>
    <property type="evidence" value="ECO:0007669"/>
    <property type="project" value="UniProtKB-UniRule"/>
</dbReference>
<dbReference type="GO" id="GO:0005524">
    <property type="term" value="F:ATP binding"/>
    <property type="evidence" value="ECO:0007669"/>
    <property type="project" value="UniProtKB-UniRule"/>
</dbReference>
<dbReference type="GO" id="GO:0019288">
    <property type="term" value="P:isopentenyl diphosphate biosynthetic process, methylerythritol 4-phosphate pathway"/>
    <property type="evidence" value="ECO:0007669"/>
    <property type="project" value="UniProtKB-UniRule"/>
</dbReference>
<dbReference type="GO" id="GO:0016114">
    <property type="term" value="P:terpenoid biosynthetic process"/>
    <property type="evidence" value="ECO:0007669"/>
    <property type="project" value="InterPro"/>
</dbReference>
<dbReference type="FunFam" id="3.30.230.10:FF:000022">
    <property type="entry name" value="4-diphosphocytidyl-2-C-methyl-D-erythritol kinase"/>
    <property type="match status" value="1"/>
</dbReference>
<dbReference type="FunFam" id="3.30.70.890:FF:000004">
    <property type="entry name" value="4-diphosphocytidyl-2-C-methyl-D-erythritol kinase"/>
    <property type="match status" value="1"/>
</dbReference>
<dbReference type="Gene3D" id="3.30.230.10">
    <property type="match status" value="1"/>
</dbReference>
<dbReference type="Gene3D" id="3.30.70.890">
    <property type="entry name" value="GHMP kinase, C-terminal domain"/>
    <property type="match status" value="1"/>
</dbReference>
<dbReference type="HAMAP" id="MF_00061">
    <property type="entry name" value="IspE"/>
    <property type="match status" value="1"/>
</dbReference>
<dbReference type="InterPro" id="IPR013750">
    <property type="entry name" value="GHMP_kinase_C_dom"/>
</dbReference>
<dbReference type="InterPro" id="IPR036554">
    <property type="entry name" value="GHMP_kinase_C_sf"/>
</dbReference>
<dbReference type="InterPro" id="IPR006204">
    <property type="entry name" value="GHMP_kinase_N_dom"/>
</dbReference>
<dbReference type="InterPro" id="IPR004424">
    <property type="entry name" value="IspE"/>
</dbReference>
<dbReference type="InterPro" id="IPR020568">
    <property type="entry name" value="Ribosomal_Su5_D2-typ_SF"/>
</dbReference>
<dbReference type="InterPro" id="IPR014721">
    <property type="entry name" value="Ribsml_uS5_D2-typ_fold_subgr"/>
</dbReference>
<dbReference type="NCBIfam" id="TIGR00154">
    <property type="entry name" value="ispE"/>
    <property type="match status" value="1"/>
</dbReference>
<dbReference type="PANTHER" id="PTHR43527">
    <property type="entry name" value="4-DIPHOSPHOCYTIDYL-2-C-METHYL-D-ERYTHRITOL KINASE, CHLOROPLASTIC"/>
    <property type="match status" value="1"/>
</dbReference>
<dbReference type="PANTHER" id="PTHR43527:SF2">
    <property type="entry name" value="4-DIPHOSPHOCYTIDYL-2-C-METHYL-D-ERYTHRITOL KINASE, CHLOROPLASTIC"/>
    <property type="match status" value="1"/>
</dbReference>
<dbReference type="Pfam" id="PF08544">
    <property type="entry name" value="GHMP_kinases_C"/>
    <property type="match status" value="1"/>
</dbReference>
<dbReference type="Pfam" id="PF00288">
    <property type="entry name" value="GHMP_kinases_N"/>
    <property type="match status" value="1"/>
</dbReference>
<dbReference type="PIRSF" id="PIRSF010376">
    <property type="entry name" value="IspE"/>
    <property type="match status" value="1"/>
</dbReference>
<dbReference type="SUPFAM" id="SSF55060">
    <property type="entry name" value="GHMP Kinase, C-terminal domain"/>
    <property type="match status" value="1"/>
</dbReference>
<dbReference type="SUPFAM" id="SSF54211">
    <property type="entry name" value="Ribosomal protein S5 domain 2-like"/>
    <property type="match status" value="1"/>
</dbReference>
<protein>
    <recommendedName>
        <fullName evidence="1">4-diphosphocytidyl-2-C-methyl-D-erythritol kinase</fullName>
        <shortName evidence="1">CMK</shortName>
        <ecNumber evidence="1">2.7.1.148</ecNumber>
    </recommendedName>
    <alternativeName>
        <fullName evidence="1">4-(cytidine-5'-diphospho)-2-C-methyl-D-erythritol kinase</fullName>
    </alternativeName>
</protein>